<evidence type="ECO:0000255" key="1">
    <source>
        <dbReference type="HAMAP-Rule" id="MF_01216"/>
    </source>
</evidence>
<keyword id="KW-0285">Flavoprotein</keyword>
<keyword id="KW-0288">FMN</keyword>
<keyword id="KW-0520">NAD</keyword>
<keyword id="KW-0560">Oxidoreductase</keyword>
<keyword id="KW-1185">Reference proteome</keyword>
<dbReference type="EC" id="1.6.5.-" evidence="1"/>
<dbReference type="EC" id="1.7.1.17" evidence="1"/>
<dbReference type="EMBL" id="CP000011">
    <property type="protein sequence ID" value="AAU46895.1"/>
    <property type="molecule type" value="Genomic_DNA"/>
</dbReference>
<dbReference type="RefSeq" id="WP_004549943.1">
    <property type="nucleotide sequence ID" value="NC_006349.2"/>
</dbReference>
<dbReference type="RefSeq" id="YP_105295.1">
    <property type="nucleotide sequence ID" value="NC_006349.2"/>
</dbReference>
<dbReference type="SMR" id="Q62DD3"/>
<dbReference type="KEGG" id="bma:BMAA0527"/>
<dbReference type="PATRIC" id="fig|243160.12.peg.4037"/>
<dbReference type="eggNOG" id="COG1182">
    <property type="taxonomic scope" value="Bacteria"/>
</dbReference>
<dbReference type="HOGENOM" id="CLU_088964_0_0_4"/>
<dbReference type="Proteomes" id="UP000006693">
    <property type="component" value="Chromosome 2"/>
</dbReference>
<dbReference type="GO" id="GO:0009055">
    <property type="term" value="F:electron transfer activity"/>
    <property type="evidence" value="ECO:0007669"/>
    <property type="project" value="UniProtKB-UniRule"/>
</dbReference>
<dbReference type="GO" id="GO:0010181">
    <property type="term" value="F:FMN binding"/>
    <property type="evidence" value="ECO:0007669"/>
    <property type="project" value="UniProtKB-UniRule"/>
</dbReference>
<dbReference type="GO" id="GO:0016652">
    <property type="term" value="F:oxidoreductase activity, acting on NAD(P)H as acceptor"/>
    <property type="evidence" value="ECO:0007669"/>
    <property type="project" value="UniProtKB-UniRule"/>
</dbReference>
<dbReference type="GO" id="GO:0016655">
    <property type="term" value="F:oxidoreductase activity, acting on NAD(P)H, quinone or similar compound as acceptor"/>
    <property type="evidence" value="ECO:0007669"/>
    <property type="project" value="InterPro"/>
</dbReference>
<dbReference type="Gene3D" id="3.40.50.360">
    <property type="match status" value="1"/>
</dbReference>
<dbReference type="HAMAP" id="MF_01216">
    <property type="entry name" value="Azoreductase_type1"/>
    <property type="match status" value="1"/>
</dbReference>
<dbReference type="InterPro" id="IPR003680">
    <property type="entry name" value="Flavodoxin_fold"/>
</dbReference>
<dbReference type="InterPro" id="IPR029039">
    <property type="entry name" value="Flavoprotein-like_sf"/>
</dbReference>
<dbReference type="InterPro" id="IPR050104">
    <property type="entry name" value="FMN-dep_NADH:Q_OxRdtase_AzoR1"/>
</dbReference>
<dbReference type="InterPro" id="IPR023048">
    <property type="entry name" value="NADH:quinone_OxRdtase_FMN_depd"/>
</dbReference>
<dbReference type="PANTHER" id="PTHR43741">
    <property type="entry name" value="FMN-DEPENDENT NADH-AZOREDUCTASE 1"/>
    <property type="match status" value="1"/>
</dbReference>
<dbReference type="PANTHER" id="PTHR43741:SF2">
    <property type="entry name" value="FMN-DEPENDENT NADH:QUINONE OXIDOREDUCTASE"/>
    <property type="match status" value="1"/>
</dbReference>
<dbReference type="Pfam" id="PF02525">
    <property type="entry name" value="Flavodoxin_2"/>
    <property type="match status" value="1"/>
</dbReference>
<dbReference type="SUPFAM" id="SSF52218">
    <property type="entry name" value="Flavoproteins"/>
    <property type="match status" value="1"/>
</dbReference>
<reference key="1">
    <citation type="journal article" date="2004" name="Proc. Natl. Acad. Sci. U.S.A.">
        <title>Structural flexibility in the Burkholderia mallei genome.</title>
        <authorList>
            <person name="Nierman W.C."/>
            <person name="DeShazer D."/>
            <person name="Kim H.S."/>
            <person name="Tettelin H."/>
            <person name="Nelson K.E."/>
            <person name="Feldblyum T.V."/>
            <person name="Ulrich R.L."/>
            <person name="Ronning C.M."/>
            <person name="Brinkac L.M."/>
            <person name="Daugherty S.C."/>
            <person name="Davidsen T.D."/>
            <person name="DeBoy R.T."/>
            <person name="Dimitrov G."/>
            <person name="Dodson R.J."/>
            <person name="Durkin A.S."/>
            <person name="Gwinn M.L."/>
            <person name="Haft D.H."/>
            <person name="Khouri H.M."/>
            <person name="Kolonay J.F."/>
            <person name="Madupu R."/>
            <person name="Mohammoud Y."/>
            <person name="Nelson W.C."/>
            <person name="Radune D."/>
            <person name="Romero C.M."/>
            <person name="Sarria S."/>
            <person name="Selengut J."/>
            <person name="Shamblin C."/>
            <person name="Sullivan S.A."/>
            <person name="White O."/>
            <person name="Yu Y."/>
            <person name="Zafar N."/>
            <person name="Zhou L."/>
            <person name="Fraser C.M."/>
        </authorList>
    </citation>
    <scope>NUCLEOTIDE SEQUENCE [LARGE SCALE GENOMIC DNA]</scope>
    <source>
        <strain>ATCC 23344</strain>
    </source>
</reference>
<comment type="function">
    <text evidence="1">Quinone reductase that provides resistance to thiol-specific stress caused by electrophilic quinones.</text>
</comment>
<comment type="function">
    <text evidence="1">Also exhibits azoreductase activity. Catalyzes the reductive cleavage of the azo bond in aromatic azo compounds to the corresponding amines.</text>
</comment>
<comment type="catalytic activity">
    <reaction evidence="1">
        <text>2 a quinone + NADH + H(+) = 2 a 1,4-benzosemiquinone + NAD(+)</text>
        <dbReference type="Rhea" id="RHEA:65952"/>
        <dbReference type="ChEBI" id="CHEBI:15378"/>
        <dbReference type="ChEBI" id="CHEBI:57540"/>
        <dbReference type="ChEBI" id="CHEBI:57945"/>
        <dbReference type="ChEBI" id="CHEBI:132124"/>
        <dbReference type="ChEBI" id="CHEBI:134225"/>
    </reaction>
</comment>
<comment type="catalytic activity">
    <reaction evidence="1">
        <text>N,N-dimethyl-1,4-phenylenediamine + anthranilate + 2 NAD(+) = 2-(4-dimethylaminophenyl)diazenylbenzoate + 2 NADH + 2 H(+)</text>
        <dbReference type="Rhea" id="RHEA:55872"/>
        <dbReference type="ChEBI" id="CHEBI:15378"/>
        <dbReference type="ChEBI" id="CHEBI:15783"/>
        <dbReference type="ChEBI" id="CHEBI:16567"/>
        <dbReference type="ChEBI" id="CHEBI:57540"/>
        <dbReference type="ChEBI" id="CHEBI:57945"/>
        <dbReference type="ChEBI" id="CHEBI:71579"/>
        <dbReference type="EC" id="1.7.1.17"/>
    </reaction>
</comment>
<comment type="cofactor">
    <cofactor evidence="1">
        <name>FMN</name>
        <dbReference type="ChEBI" id="CHEBI:58210"/>
    </cofactor>
    <text evidence="1">Binds 1 FMN per subunit.</text>
</comment>
<comment type="subunit">
    <text evidence="1">Homodimer.</text>
</comment>
<comment type="similarity">
    <text evidence="1">Belongs to the azoreductase type 1 family.</text>
</comment>
<sequence>MTTILQINSAARSQGAQSTLLADELTAKLQQGNPGATVKVRNLLADALPHLDDAVLGAFFTPADQRSAEQNAIVAKSDELVDELRSADVIVIGAPMYNFGVSSQLKAYFDWIARAGVTFRYTSEGPEGLIKGKKAYVVSARGGKHVGMPTDSQTPFLKTFLGFIGLTDVTFVYAEGLALGPDAATEALASAREAIAAV</sequence>
<accession>Q62DD3</accession>
<proteinExistence type="inferred from homology"/>
<gene>
    <name evidence="1" type="primary">azoR</name>
    <name type="ordered locus">BMAA0527</name>
</gene>
<organism>
    <name type="scientific">Burkholderia mallei (strain ATCC 23344)</name>
    <dbReference type="NCBI Taxonomy" id="243160"/>
    <lineage>
        <taxon>Bacteria</taxon>
        <taxon>Pseudomonadati</taxon>
        <taxon>Pseudomonadota</taxon>
        <taxon>Betaproteobacteria</taxon>
        <taxon>Burkholderiales</taxon>
        <taxon>Burkholderiaceae</taxon>
        <taxon>Burkholderia</taxon>
        <taxon>pseudomallei group</taxon>
    </lineage>
</organism>
<protein>
    <recommendedName>
        <fullName evidence="1">FMN-dependent NADH:quinone oxidoreductase</fullName>
        <ecNumber evidence="1">1.6.5.-</ecNumber>
    </recommendedName>
    <alternativeName>
        <fullName evidence="1">Azo-dye reductase</fullName>
    </alternativeName>
    <alternativeName>
        <fullName evidence="1">FMN-dependent NADH-azo compound oxidoreductase</fullName>
    </alternativeName>
    <alternativeName>
        <fullName evidence="1">FMN-dependent NADH-azoreductase</fullName>
        <ecNumber evidence="1">1.7.1.17</ecNumber>
    </alternativeName>
</protein>
<feature type="chain" id="PRO_0000245898" description="FMN-dependent NADH:quinone oxidoreductase">
    <location>
        <begin position="1"/>
        <end position="198"/>
    </location>
</feature>
<feature type="binding site" evidence="1">
    <location>
        <begin position="96"/>
        <end position="99"/>
    </location>
    <ligand>
        <name>FMN</name>
        <dbReference type="ChEBI" id="CHEBI:58210"/>
    </ligand>
</feature>
<name>AZOR_BURMA</name>